<reference key="1">
    <citation type="journal article" date="2004" name="Nucleic Acids Res.">
        <title>Whole genome comparisons of serotype 4b and 1/2a strains of the food-borne pathogen Listeria monocytogenes reveal new insights into the core genome components of this species.</title>
        <authorList>
            <person name="Nelson K.E."/>
            <person name="Fouts D.E."/>
            <person name="Mongodin E.F."/>
            <person name="Ravel J."/>
            <person name="DeBoy R.T."/>
            <person name="Kolonay J.F."/>
            <person name="Rasko D.A."/>
            <person name="Angiuoli S.V."/>
            <person name="Gill S.R."/>
            <person name="Paulsen I.T."/>
            <person name="Peterson J.D."/>
            <person name="White O."/>
            <person name="Nelson W.C."/>
            <person name="Nierman W.C."/>
            <person name="Beanan M.J."/>
            <person name="Brinkac L.M."/>
            <person name="Daugherty S.C."/>
            <person name="Dodson R.J."/>
            <person name="Durkin A.S."/>
            <person name="Madupu R."/>
            <person name="Haft D.H."/>
            <person name="Selengut J."/>
            <person name="Van Aken S.E."/>
            <person name="Khouri H.M."/>
            <person name="Fedorova N."/>
            <person name="Forberger H.A."/>
            <person name="Tran B."/>
            <person name="Kathariou S."/>
            <person name="Wonderling L.D."/>
            <person name="Uhlich G.A."/>
            <person name="Bayles D.O."/>
            <person name="Luchansky J.B."/>
            <person name="Fraser C.M."/>
        </authorList>
    </citation>
    <scope>NUCLEOTIDE SEQUENCE [LARGE SCALE GENOMIC DNA]</scope>
    <source>
        <strain>F2365</strain>
    </source>
</reference>
<gene>
    <name evidence="1" type="primary">hslU</name>
    <name type="ordered locus">LMOf2365_1297</name>
</gene>
<keyword id="KW-0067">ATP-binding</keyword>
<keyword id="KW-0143">Chaperone</keyword>
<keyword id="KW-0963">Cytoplasm</keyword>
<keyword id="KW-0547">Nucleotide-binding</keyword>
<feature type="chain" id="PRO_0000160521" description="ATP-dependent protease ATPase subunit HslU">
    <location>
        <begin position="1"/>
        <end position="469"/>
    </location>
</feature>
<feature type="binding site" evidence="1">
    <location>
        <position position="24"/>
    </location>
    <ligand>
        <name>ATP</name>
        <dbReference type="ChEBI" id="CHEBI:30616"/>
    </ligand>
</feature>
<feature type="binding site" evidence="1">
    <location>
        <begin position="66"/>
        <end position="71"/>
    </location>
    <ligand>
        <name>ATP</name>
        <dbReference type="ChEBI" id="CHEBI:30616"/>
    </ligand>
</feature>
<feature type="binding site" evidence="1">
    <location>
        <position position="282"/>
    </location>
    <ligand>
        <name>ATP</name>
        <dbReference type="ChEBI" id="CHEBI:30616"/>
    </ligand>
</feature>
<feature type="binding site" evidence="1">
    <location>
        <position position="347"/>
    </location>
    <ligand>
        <name>ATP</name>
        <dbReference type="ChEBI" id="CHEBI:30616"/>
    </ligand>
</feature>
<feature type="binding site" evidence="1">
    <location>
        <position position="419"/>
    </location>
    <ligand>
        <name>ATP</name>
        <dbReference type="ChEBI" id="CHEBI:30616"/>
    </ligand>
</feature>
<organism>
    <name type="scientific">Listeria monocytogenes serotype 4b (strain F2365)</name>
    <dbReference type="NCBI Taxonomy" id="265669"/>
    <lineage>
        <taxon>Bacteria</taxon>
        <taxon>Bacillati</taxon>
        <taxon>Bacillota</taxon>
        <taxon>Bacilli</taxon>
        <taxon>Bacillales</taxon>
        <taxon>Listeriaceae</taxon>
        <taxon>Listeria</taxon>
    </lineage>
</organism>
<proteinExistence type="inferred from homology"/>
<evidence type="ECO:0000255" key="1">
    <source>
        <dbReference type="HAMAP-Rule" id="MF_00249"/>
    </source>
</evidence>
<evidence type="ECO:0000305" key="2"/>
<protein>
    <recommendedName>
        <fullName evidence="1">ATP-dependent protease ATPase subunit HslU</fullName>
    </recommendedName>
    <alternativeName>
        <fullName evidence="1">Unfoldase HslU</fullName>
    </alternativeName>
</protein>
<name>HSLU_LISMF</name>
<comment type="function">
    <text evidence="1">ATPase subunit of a proteasome-like degradation complex; this subunit has chaperone activity. The binding of ATP and its subsequent hydrolysis by HslU are essential for unfolding of protein substrates subsequently hydrolyzed by HslV. HslU recognizes the N-terminal part of its protein substrates and unfolds these before they are guided to HslV for hydrolysis.</text>
</comment>
<comment type="subunit">
    <text evidence="1">A double ring-shaped homohexamer of HslV is capped on each side by a ring-shaped HslU homohexamer. The assembly of the HslU/HslV complex is dependent on binding of ATP.</text>
</comment>
<comment type="subcellular location">
    <subcellularLocation>
        <location evidence="1">Cytoplasm</location>
    </subcellularLocation>
</comment>
<comment type="similarity">
    <text evidence="1">Belongs to the ClpX chaperone family. HslU subfamily.</text>
</comment>
<comment type="sequence caution" evidence="2">
    <conflict type="erroneous initiation">
        <sequence resource="EMBL-CDS" id="AAT04072"/>
    </conflict>
</comment>
<dbReference type="EMBL" id="AE017262">
    <property type="protein sequence ID" value="AAT04072.1"/>
    <property type="status" value="ALT_INIT"/>
    <property type="molecule type" value="Genomic_DNA"/>
</dbReference>
<dbReference type="RefSeq" id="WP_003727514.1">
    <property type="nucleotide sequence ID" value="NC_002973.6"/>
</dbReference>
<dbReference type="SMR" id="Q720E2"/>
<dbReference type="KEGG" id="lmf:LMOf2365_1297"/>
<dbReference type="HOGENOM" id="CLU_033123_0_0_9"/>
<dbReference type="GO" id="GO:0009376">
    <property type="term" value="C:HslUV protease complex"/>
    <property type="evidence" value="ECO:0007669"/>
    <property type="project" value="UniProtKB-UniRule"/>
</dbReference>
<dbReference type="GO" id="GO:0005524">
    <property type="term" value="F:ATP binding"/>
    <property type="evidence" value="ECO:0007669"/>
    <property type="project" value="UniProtKB-UniRule"/>
</dbReference>
<dbReference type="GO" id="GO:0016887">
    <property type="term" value="F:ATP hydrolysis activity"/>
    <property type="evidence" value="ECO:0007669"/>
    <property type="project" value="InterPro"/>
</dbReference>
<dbReference type="GO" id="GO:0008233">
    <property type="term" value="F:peptidase activity"/>
    <property type="evidence" value="ECO:0007669"/>
    <property type="project" value="InterPro"/>
</dbReference>
<dbReference type="GO" id="GO:0036402">
    <property type="term" value="F:proteasome-activating activity"/>
    <property type="evidence" value="ECO:0007669"/>
    <property type="project" value="UniProtKB-UniRule"/>
</dbReference>
<dbReference type="GO" id="GO:0043335">
    <property type="term" value="P:protein unfolding"/>
    <property type="evidence" value="ECO:0007669"/>
    <property type="project" value="UniProtKB-UniRule"/>
</dbReference>
<dbReference type="GO" id="GO:0051603">
    <property type="term" value="P:proteolysis involved in protein catabolic process"/>
    <property type="evidence" value="ECO:0007669"/>
    <property type="project" value="TreeGrafter"/>
</dbReference>
<dbReference type="CDD" id="cd19498">
    <property type="entry name" value="RecA-like_HslU"/>
    <property type="match status" value="1"/>
</dbReference>
<dbReference type="Gene3D" id="1.10.8.60">
    <property type="match status" value="1"/>
</dbReference>
<dbReference type="Gene3D" id="3.40.50.300">
    <property type="entry name" value="P-loop containing nucleotide triphosphate hydrolases"/>
    <property type="match status" value="2"/>
</dbReference>
<dbReference type="HAMAP" id="MF_00249">
    <property type="entry name" value="HslU"/>
    <property type="match status" value="1"/>
</dbReference>
<dbReference type="InterPro" id="IPR003593">
    <property type="entry name" value="AAA+_ATPase"/>
</dbReference>
<dbReference type="InterPro" id="IPR050052">
    <property type="entry name" value="ATP-dep_Clp_protease_ClpX"/>
</dbReference>
<dbReference type="InterPro" id="IPR003959">
    <property type="entry name" value="ATPase_AAA_core"/>
</dbReference>
<dbReference type="InterPro" id="IPR019489">
    <property type="entry name" value="Clp_ATPase_C"/>
</dbReference>
<dbReference type="InterPro" id="IPR004491">
    <property type="entry name" value="HslU"/>
</dbReference>
<dbReference type="InterPro" id="IPR027417">
    <property type="entry name" value="P-loop_NTPase"/>
</dbReference>
<dbReference type="NCBIfam" id="TIGR00390">
    <property type="entry name" value="hslU"/>
    <property type="match status" value="1"/>
</dbReference>
<dbReference type="NCBIfam" id="NF003544">
    <property type="entry name" value="PRK05201.1"/>
    <property type="match status" value="1"/>
</dbReference>
<dbReference type="PANTHER" id="PTHR48102">
    <property type="entry name" value="ATP-DEPENDENT CLP PROTEASE ATP-BINDING SUBUNIT CLPX-LIKE, MITOCHONDRIAL-RELATED"/>
    <property type="match status" value="1"/>
</dbReference>
<dbReference type="PANTHER" id="PTHR48102:SF3">
    <property type="entry name" value="ATP-DEPENDENT PROTEASE ATPASE SUBUNIT HSLU"/>
    <property type="match status" value="1"/>
</dbReference>
<dbReference type="Pfam" id="PF00004">
    <property type="entry name" value="AAA"/>
    <property type="match status" value="1"/>
</dbReference>
<dbReference type="Pfam" id="PF07724">
    <property type="entry name" value="AAA_2"/>
    <property type="match status" value="1"/>
</dbReference>
<dbReference type="Pfam" id="PF10431">
    <property type="entry name" value="ClpB_D2-small"/>
    <property type="match status" value="1"/>
</dbReference>
<dbReference type="SMART" id="SM00382">
    <property type="entry name" value="AAA"/>
    <property type="match status" value="1"/>
</dbReference>
<dbReference type="SMART" id="SM01086">
    <property type="entry name" value="ClpB_D2-small"/>
    <property type="match status" value="1"/>
</dbReference>
<dbReference type="SUPFAM" id="SSF52540">
    <property type="entry name" value="P-loop containing nucleoside triphosphate hydrolases"/>
    <property type="match status" value="1"/>
</dbReference>
<sequence>MTNITLMNQLTPKQIVEKLDQYIIGQTGAKKSVAVALRNRYRRQLMDESIRDEIIPKNILMIGPTGVGKTEIARRIAKIVRAPFSKVEATKFTEVGYVGRDVESMVRDLVEVSVRLVKEEKMQLVRVKAEKNAEKRLIKLLAPSQKKKQTTSQNPLEALFGGMNQPDESPEEEVDQELKNKRSQIEWRLQNGELDDEIVTVEVKEQQNPMLDMMRGAGMDQMNGMQDALSGMFPAKKKKRKVTVREAKKILFEDEASKLIDADELAAEGIHRAEQMGMIFIDEIDKIASKEGGGNAQVSREGVQRDILPIVEGSQISTKYGTVNTEYILFIAAGAFHMSKPSDLIPELQGRFPIRIELDKLTQEDFYKILTEPDNALIKQYKALLKTEGIDLIFTKEAVERIAEIAFQVNQDSDNIGARRLHTILEKLLEDLLFEAPEINMESIKVTENYVNEKLAPIMQNKDLTQFIL</sequence>
<accession>Q720E2</accession>